<keyword id="KW-1015">Disulfide bond</keyword>
<keyword id="KW-0378">Hydrolase</keyword>
<keyword id="KW-0645">Protease</keyword>
<keyword id="KW-1185">Reference proteome</keyword>
<keyword id="KW-0964">Secreted</keyword>
<keyword id="KW-0720">Serine protease</keyword>
<keyword id="KW-0732">Signal</keyword>
<keyword id="KW-0865">Zymogen</keyword>
<evidence type="ECO:0000250" key="1">
    <source>
        <dbReference type="UniProtKB" id="P04814"/>
    </source>
</evidence>
<evidence type="ECO:0000255" key="2"/>
<evidence type="ECO:0000255" key="3">
    <source>
        <dbReference type="PROSITE-ProRule" id="PRU00274"/>
    </source>
</evidence>
<evidence type="ECO:0000305" key="4"/>
<evidence type="ECO:0000312" key="5">
    <source>
        <dbReference type="FlyBase" id="FBgn0010359"/>
    </source>
</evidence>
<sequence length="253" mass="25680">MLKFVILLSAVACALGGTVPEGLLPQLDGRIVGGSATTISSFPWQISLQRSGSHSCGGSIYSSNVIVTAAHCLQSVSASVLQIRAGSSYWSSGGVTFSVSSFKNHEGYNANTMVNDIAIIKINGALTFSSTIKAIGLASSNPANGAAASVSGWGTLSYGSSSIPSQLQYVNVNIVSQSQCASSTYGYGSQIRSTMICAAASGKDACQGDSGGPLVSGGVLVGVVSWGYGCAYSNYPGVYADVAALRSWVISNA</sequence>
<name>TRYGT_DROME</name>
<reference key="1">
    <citation type="journal article" date="1999" name="Mol. Biol. Evol.">
        <title>Concerted evolution within a trypsin gene cluster in Drosophila.</title>
        <authorList>
            <person name="Wang S."/>
            <person name="Magoulas C."/>
            <person name="Hickey D.A."/>
        </authorList>
    </citation>
    <scope>NUCLEOTIDE SEQUENCE [GENOMIC DNA]</scope>
    <source>
        <strain>Oregon-R</strain>
    </source>
</reference>
<reference key="2">
    <citation type="journal article" date="2000" name="Science">
        <title>The genome sequence of Drosophila melanogaster.</title>
        <authorList>
            <person name="Adams M.D."/>
            <person name="Celniker S.E."/>
            <person name="Holt R.A."/>
            <person name="Evans C.A."/>
            <person name="Gocayne J.D."/>
            <person name="Amanatides P.G."/>
            <person name="Scherer S.E."/>
            <person name="Li P.W."/>
            <person name="Hoskins R.A."/>
            <person name="Galle R.F."/>
            <person name="George R.A."/>
            <person name="Lewis S.E."/>
            <person name="Richards S."/>
            <person name="Ashburner M."/>
            <person name="Henderson S.N."/>
            <person name="Sutton G.G."/>
            <person name="Wortman J.R."/>
            <person name="Yandell M.D."/>
            <person name="Zhang Q."/>
            <person name="Chen L.X."/>
            <person name="Brandon R.C."/>
            <person name="Rogers Y.-H.C."/>
            <person name="Blazej R.G."/>
            <person name="Champe M."/>
            <person name="Pfeiffer B.D."/>
            <person name="Wan K.H."/>
            <person name="Doyle C."/>
            <person name="Baxter E.G."/>
            <person name="Helt G."/>
            <person name="Nelson C.R."/>
            <person name="Miklos G.L.G."/>
            <person name="Abril J.F."/>
            <person name="Agbayani A."/>
            <person name="An H.-J."/>
            <person name="Andrews-Pfannkoch C."/>
            <person name="Baldwin D."/>
            <person name="Ballew R.M."/>
            <person name="Basu A."/>
            <person name="Baxendale J."/>
            <person name="Bayraktaroglu L."/>
            <person name="Beasley E.M."/>
            <person name="Beeson K.Y."/>
            <person name="Benos P.V."/>
            <person name="Berman B.P."/>
            <person name="Bhandari D."/>
            <person name="Bolshakov S."/>
            <person name="Borkova D."/>
            <person name="Botchan M.R."/>
            <person name="Bouck J."/>
            <person name="Brokstein P."/>
            <person name="Brottier P."/>
            <person name="Burtis K.C."/>
            <person name="Busam D.A."/>
            <person name="Butler H."/>
            <person name="Cadieu E."/>
            <person name="Center A."/>
            <person name="Chandra I."/>
            <person name="Cherry J.M."/>
            <person name="Cawley S."/>
            <person name="Dahlke C."/>
            <person name="Davenport L.B."/>
            <person name="Davies P."/>
            <person name="de Pablos B."/>
            <person name="Delcher A."/>
            <person name="Deng Z."/>
            <person name="Mays A.D."/>
            <person name="Dew I."/>
            <person name="Dietz S.M."/>
            <person name="Dodson K."/>
            <person name="Doup L.E."/>
            <person name="Downes M."/>
            <person name="Dugan-Rocha S."/>
            <person name="Dunkov B.C."/>
            <person name="Dunn P."/>
            <person name="Durbin K.J."/>
            <person name="Evangelista C.C."/>
            <person name="Ferraz C."/>
            <person name="Ferriera S."/>
            <person name="Fleischmann W."/>
            <person name="Fosler C."/>
            <person name="Gabrielian A.E."/>
            <person name="Garg N.S."/>
            <person name="Gelbart W.M."/>
            <person name="Glasser K."/>
            <person name="Glodek A."/>
            <person name="Gong F."/>
            <person name="Gorrell J.H."/>
            <person name="Gu Z."/>
            <person name="Guan P."/>
            <person name="Harris M."/>
            <person name="Harris N.L."/>
            <person name="Harvey D.A."/>
            <person name="Heiman T.J."/>
            <person name="Hernandez J.R."/>
            <person name="Houck J."/>
            <person name="Hostin D."/>
            <person name="Houston K.A."/>
            <person name="Howland T.J."/>
            <person name="Wei M.-H."/>
            <person name="Ibegwam C."/>
            <person name="Jalali M."/>
            <person name="Kalush F."/>
            <person name="Karpen G.H."/>
            <person name="Ke Z."/>
            <person name="Kennison J.A."/>
            <person name="Ketchum K.A."/>
            <person name="Kimmel B.E."/>
            <person name="Kodira C.D."/>
            <person name="Kraft C.L."/>
            <person name="Kravitz S."/>
            <person name="Kulp D."/>
            <person name="Lai Z."/>
            <person name="Lasko P."/>
            <person name="Lei Y."/>
            <person name="Levitsky A.A."/>
            <person name="Li J.H."/>
            <person name="Li Z."/>
            <person name="Liang Y."/>
            <person name="Lin X."/>
            <person name="Liu X."/>
            <person name="Mattei B."/>
            <person name="McIntosh T.C."/>
            <person name="McLeod M.P."/>
            <person name="McPherson D."/>
            <person name="Merkulov G."/>
            <person name="Milshina N.V."/>
            <person name="Mobarry C."/>
            <person name="Morris J."/>
            <person name="Moshrefi A."/>
            <person name="Mount S.M."/>
            <person name="Moy M."/>
            <person name="Murphy B."/>
            <person name="Murphy L."/>
            <person name="Muzny D.M."/>
            <person name="Nelson D.L."/>
            <person name="Nelson D.R."/>
            <person name="Nelson K.A."/>
            <person name="Nixon K."/>
            <person name="Nusskern D.R."/>
            <person name="Pacleb J.M."/>
            <person name="Palazzolo M."/>
            <person name="Pittman G.S."/>
            <person name="Pan S."/>
            <person name="Pollard J."/>
            <person name="Puri V."/>
            <person name="Reese M.G."/>
            <person name="Reinert K."/>
            <person name="Remington K."/>
            <person name="Saunders R.D.C."/>
            <person name="Scheeler F."/>
            <person name="Shen H."/>
            <person name="Shue B.C."/>
            <person name="Siden-Kiamos I."/>
            <person name="Simpson M."/>
            <person name="Skupski M.P."/>
            <person name="Smith T.J."/>
            <person name="Spier E."/>
            <person name="Spradling A.C."/>
            <person name="Stapleton M."/>
            <person name="Strong R."/>
            <person name="Sun E."/>
            <person name="Svirskas R."/>
            <person name="Tector C."/>
            <person name="Turner R."/>
            <person name="Venter E."/>
            <person name="Wang A.H."/>
            <person name="Wang X."/>
            <person name="Wang Z.-Y."/>
            <person name="Wassarman D.A."/>
            <person name="Weinstock G.M."/>
            <person name="Weissenbach J."/>
            <person name="Williams S.M."/>
            <person name="Woodage T."/>
            <person name="Worley K.C."/>
            <person name="Wu D."/>
            <person name="Yang S."/>
            <person name="Yao Q.A."/>
            <person name="Ye J."/>
            <person name="Yeh R.-F."/>
            <person name="Zaveri J.S."/>
            <person name="Zhan M."/>
            <person name="Zhang G."/>
            <person name="Zhao Q."/>
            <person name="Zheng L."/>
            <person name="Zheng X.H."/>
            <person name="Zhong F.N."/>
            <person name="Zhong W."/>
            <person name="Zhou X."/>
            <person name="Zhu S.C."/>
            <person name="Zhu X."/>
            <person name="Smith H.O."/>
            <person name="Gibbs R.A."/>
            <person name="Myers E.W."/>
            <person name="Rubin G.M."/>
            <person name="Venter J.C."/>
        </authorList>
    </citation>
    <scope>NUCLEOTIDE SEQUENCE [LARGE SCALE GENOMIC DNA]</scope>
    <source>
        <strain>Berkeley</strain>
    </source>
</reference>
<reference key="3">
    <citation type="journal article" date="2002" name="Genome Biol.">
        <title>Annotation of the Drosophila melanogaster euchromatic genome: a systematic review.</title>
        <authorList>
            <person name="Misra S."/>
            <person name="Crosby M.A."/>
            <person name="Mungall C.J."/>
            <person name="Matthews B.B."/>
            <person name="Campbell K.S."/>
            <person name="Hradecky P."/>
            <person name="Huang Y."/>
            <person name="Kaminker J.S."/>
            <person name="Millburn G.H."/>
            <person name="Prochnik S.E."/>
            <person name="Smith C.D."/>
            <person name="Tupy J.L."/>
            <person name="Whitfield E.J."/>
            <person name="Bayraktaroglu L."/>
            <person name="Berman B.P."/>
            <person name="Bettencourt B.R."/>
            <person name="Celniker S.E."/>
            <person name="de Grey A.D.N.J."/>
            <person name="Drysdale R.A."/>
            <person name="Harris N.L."/>
            <person name="Richter J."/>
            <person name="Russo S."/>
            <person name="Schroeder A.J."/>
            <person name="Shu S.Q."/>
            <person name="Stapleton M."/>
            <person name="Yamada C."/>
            <person name="Ashburner M."/>
            <person name="Gelbart W.M."/>
            <person name="Rubin G.M."/>
            <person name="Lewis S.E."/>
        </authorList>
    </citation>
    <scope>GENOME REANNOTATION</scope>
    <source>
        <strain>Berkeley</strain>
    </source>
</reference>
<reference key="4">
    <citation type="submission" date="2003-12" db="EMBL/GenBank/DDBJ databases">
        <authorList>
            <person name="Stapleton M."/>
            <person name="Brokstein P."/>
            <person name="Hong L."/>
            <person name="Agbayani A."/>
            <person name="Carlson J.W."/>
            <person name="Champe M."/>
            <person name="Chavez C."/>
            <person name="Dorsett V."/>
            <person name="Dresnek D."/>
            <person name="Farfan D."/>
            <person name="Frise E."/>
            <person name="George R.A."/>
            <person name="Gonzalez M."/>
            <person name="Guarin H."/>
            <person name="Kronmiller B."/>
            <person name="Li P.W."/>
            <person name="Liao G."/>
            <person name="Miranda A."/>
            <person name="Mungall C.J."/>
            <person name="Nunoo J."/>
            <person name="Pacleb J.M."/>
            <person name="Paragas V."/>
            <person name="Park S."/>
            <person name="Patel S."/>
            <person name="Phouanenavong S."/>
            <person name="Wan K.H."/>
            <person name="Yu C."/>
            <person name="Lewis S.E."/>
            <person name="Rubin G.M."/>
            <person name="Celniker S.E."/>
        </authorList>
    </citation>
    <scope>NUCLEOTIDE SEQUENCE [LARGE SCALE MRNA]</scope>
    <source>
        <strain>Berkeley</strain>
        <tissue>Embryo</tissue>
    </source>
</reference>
<gene>
    <name evidence="5" type="primary">gammaTry</name>
    <name evidence="5" type="ORF">CG30028</name>
</gene>
<accession>C0HKA3</accession>
<accession>P42276</accession>
<accession>P42277</accession>
<accession>Q8SXZ4</accession>
<accession>Q9V5Y4</accession>
<feature type="signal peptide" evidence="4">
    <location>
        <begin position="1"/>
        <end position="22"/>
    </location>
</feature>
<feature type="propeptide" id="PRO_0000438899" description="Activation peptide">
    <location>
        <begin position="23"/>
        <end position="30"/>
    </location>
</feature>
<feature type="chain" id="PRO_0000438900" description="Trypsin gamma" evidence="2">
    <location>
        <begin position="31"/>
        <end position="253"/>
    </location>
</feature>
<feature type="domain" description="Peptidase S1" evidence="3">
    <location>
        <begin position="31"/>
        <end position="253"/>
    </location>
</feature>
<feature type="active site" description="Charge relay system" evidence="3">
    <location>
        <position position="71"/>
    </location>
</feature>
<feature type="active site" description="Charge relay system" evidence="3">
    <location>
        <position position="116"/>
    </location>
</feature>
<feature type="active site" description="Charge relay system" evidence="3">
    <location>
        <position position="210"/>
    </location>
</feature>
<feature type="disulfide bond" evidence="3">
    <location>
        <begin position="56"/>
        <end position="72"/>
    </location>
</feature>
<feature type="disulfide bond" evidence="3">
    <location>
        <begin position="180"/>
        <end position="197"/>
    </location>
</feature>
<feature type="disulfide bond" evidence="3">
    <location>
        <begin position="206"/>
        <end position="230"/>
    </location>
</feature>
<feature type="sequence conflict" description="In Ref. 1; AAA17450." evidence="4" ref="1">
    <original>A</original>
    <variation>V</variation>
    <location>
        <position position="118"/>
    </location>
</feature>
<feature type="sequence conflict" description="In Ref. 1; AAA17450." evidence="4" ref="1">
    <original>A</original>
    <variation>G</variation>
    <location>
        <position position="148"/>
    </location>
</feature>
<proteinExistence type="evidence at transcript level"/>
<protein>
    <recommendedName>
        <fullName evidence="5">Trypsin gamma</fullName>
        <ecNumber evidence="3">3.4.21.4</ecNumber>
    </recommendedName>
</protein>
<organism>
    <name type="scientific">Drosophila melanogaster</name>
    <name type="common">Fruit fly</name>
    <dbReference type="NCBI Taxonomy" id="7227"/>
    <lineage>
        <taxon>Eukaryota</taxon>
        <taxon>Metazoa</taxon>
        <taxon>Ecdysozoa</taxon>
        <taxon>Arthropoda</taxon>
        <taxon>Hexapoda</taxon>
        <taxon>Insecta</taxon>
        <taxon>Pterygota</taxon>
        <taxon>Neoptera</taxon>
        <taxon>Endopterygota</taxon>
        <taxon>Diptera</taxon>
        <taxon>Brachycera</taxon>
        <taxon>Muscomorpha</taxon>
        <taxon>Ephydroidea</taxon>
        <taxon>Drosophilidae</taxon>
        <taxon>Drosophila</taxon>
        <taxon>Sophophora</taxon>
    </lineage>
</organism>
<comment type="catalytic activity">
    <reaction>
        <text>Preferential cleavage: Arg-|-Xaa, Lys-|-Xaa.</text>
        <dbReference type="EC" id="3.4.21.4"/>
    </reaction>
</comment>
<comment type="subcellular location">
    <subcellularLocation>
        <location evidence="1">Secreted</location>
        <location evidence="1">Extracellular space</location>
    </subcellularLocation>
</comment>
<comment type="similarity">
    <text evidence="3">Belongs to the peptidase S1 family.</text>
</comment>
<dbReference type="EC" id="3.4.21.4" evidence="3"/>
<dbReference type="EMBL" id="U04853">
    <property type="protein sequence ID" value="AAA17450.1"/>
    <property type="molecule type" value="Genomic_DNA"/>
</dbReference>
<dbReference type="EMBL" id="AE013599">
    <property type="protein sequence ID" value="AAM68730.1"/>
    <property type="molecule type" value="Genomic_DNA"/>
</dbReference>
<dbReference type="EMBL" id="AY075487">
    <property type="protein sequence ID" value="AAL68297.1"/>
    <property type="molecule type" value="mRNA"/>
</dbReference>
<dbReference type="RefSeq" id="NP_725034.1">
    <property type="nucleotide sequence ID" value="NM_165823.3"/>
</dbReference>
<dbReference type="SMR" id="C0HKA3"/>
<dbReference type="FunCoup" id="C0HKA3">
    <property type="interactions" value="70"/>
</dbReference>
<dbReference type="DNASU" id="246404"/>
<dbReference type="EnsemblMetazoa" id="FBtr0088123">
    <property type="protein sequence ID" value="FBpp0087224"/>
    <property type="gene ID" value="FBgn0050031"/>
</dbReference>
<dbReference type="EnsemblMetazoa" id="FBtr0088124">
    <property type="protein sequence ID" value="FBpp0087225"/>
    <property type="gene ID" value="FBgn0010358"/>
</dbReference>
<dbReference type="EnsemblMetazoa" id="FBtr0088159">
    <property type="protein sequence ID" value="FBpp0087255"/>
    <property type="gene ID" value="FBgn0010359"/>
</dbReference>
<dbReference type="GeneID" id="36221"/>
<dbReference type="KEGG" id="dme:Dmel_CG12351"/>
<dbReference type="KEGG" id="dme:Dmel_CG30028"/>
<dbReference type="KEGG" id="dme:Dmel_CG30031"/>
<dbReference type="AGR" id="FB:FBgn0010359"/>
<dbReference type="CTD" id="36221"/>
<dbReference type="CTD" id="48343"/>
<dbReference type="FlyBase" id="FBgn0010359">
    <property type="gene designation" value="gammaTry"/>
</dbReference>
<dbReference type="VEuPathDB" id="VectorBase:FBgn0010358"/>
<dbReference type="VEuPathDB" id="VectorBase:FBgn0010359"/>
<dbReference type="VEuPathDB" id="VectorBase:FBgn0050031"/>
<dbReference type="InParanoid" id="C0HKA3"/>
<dbReference type="OMA" id="QMAFINS"/>
<dbReference type="OrthoDB" id="10059102at2759"/>
<dbReference type="PRO" id="PR:C0HKA3"/>
<dbReference type="Proteomes" id="UP000000803">
    <property type="component" value="Chromosome 2R"/>
</dbReference>
<dbReference type="Bgee" id="FBgn0010358">
    <property type="expression patterns" value="Expressed in larva and 16 other cell types or tissues"/>
</dbReference>
<dbReference type="ExpressionAtlas" id="C0HKA3">
    <property type="expression patterns" value="baseline and differential"/>
</dbReference>
<dbReference type="GO" id="GO:0005576">
    <property type="term" value="C:extracellular region"/>
    <property type="evidence" value="ECO:0007669"/>
    <property type="project" value="UniProtKB-SubCell"/>
</dbReference>
<dbReference type="GO" id="GO:0004252">
    <property type="term" value="F:serine-type endopeptidase activity"/>
    <property type="evidence" value="ECO:0000255"/>
    <property type="project" value="FlyBase"/>
</dbReference>
<dbReference type="GO" id="GO:0006508">
    <property type="term" value="P:proteolysis"/>
    <property type="evidence" value="ECO:0007669"/>
    <property type="project" value="UniProtKB-KW"/>
</dbReference>
<dbReference type="CDD" id="cd00190">
    <property type="entry name" value="Tryp_SPc"/>
    <property type="match status" value="1"/>
</dbReference>
<dbReference type="FunFam" id="2.40.10.10:FF:000077">
    <property type="entry name" value="Predicted protein"/>
    <property type="match status" value="1"/>
</dbReference>
<dbReference type="Gene3D" id="2.40.10.10">
    <property type="entry name" value="Trypsin-like serine proteases"/>
    <property type="match status" value="2"/>
</dbReference>
<dbReference type="InterPro" id="IPR050430">
    <property type="entry name" value="Peptidase_S1"/>
</dbReference>
<dbReference type="InterPro" id="IPR009003">
    <property type="entry name" value="Peptidase_S1_PA"/>
</dbReference>
<dbReference type="InterPro" id="IPR043504">
    <property type="entry name" value="Peptidase_S1_PA_chymotrypsin"/>
</dbReference>
<dbReference type="InterPro" id="IPR001314">
    <property type="entry name" value="Peptidase_S1A"/>
</dbReference>
<dbReference type="InterPro" id="IPR001254">
    <property type="entry name" value="Trypsin_dom"/>
</dbReference>
<dbReference type="InterPro" id="IPR018114">
    <property type="entry name" value="TRYPSIN_HIS"/>
</dbReference>
<dbReference type="InterPro" id="IPR033116">
    <property type="entry name" value="TRYPSIN_SER"/>
</dbReference>
<dbReference type="PANTHER" id="PTHR24276:SF91">
    <property type="entry name" value="AT26814P-RELATED"/>
    <property type="match status" value="1"/>
</dbReference>
<dbReference type="PANTHER" id="PTHR24276">
    <property type="entry name" value="POLYSERASE-RELATED"/>
    <property type="match status" value="1"/>
</dbReference>
<dbReference type="Pfam" id="PF00089">
    <property type="entry name" value="Trypsin"/>
    <property type="match status" value="1"/>
</dbReference>
<dbReference type="PRINTS" id="PR00722">
    <property type="entry name" value="CHYMOTRYPSIN"/>
</dbReference>
<dbReference type="SMART" id="SM00020">
    <property type="entry name" value="Tryp_SPc"/>
    <property type="match status" value="1"/>
</dbReference>
<dbReference type="SUPFAM" id="SSF50494">
    <property type="entry name" value="Trypsin-like serine proteases"/>
    <property type="match status" value="1"/>
</dbReference>
<dbReference type="PROSITE" id="PS50240">
    <property type="entry name" value="TRYPSIN_DOM"/>
    <property type="match status" value="1"/>
</dbReference>
<dbReference type="PROSITE" id="PS00134">
    <property type="entry name" value="TRYPSIN_HIS"/>
    <property type="match status" value="1"/>
</dbReference>
<dbReference type="PROSITE" id="PS00135">
    <property type="entry name" value="TRYPSIN_SER"/>
    <property type="match status" value="1"/>
</dbReference>